<reference key="1">
    <citation type="journal article" date="2009" name="Science">
        <title>The dynamics and time scale of ongoing genomic erosion in symbiotic bacteria.</title>
        <authorList>
            <person name="Moran N.A."/>
            <person name="McLaughlin H.J."/>
            <person name="Sorek R."/>
        </authorList>
    </citation>
    <scope>NUCLEOTIDE SEQUENCE [LARGE SCALE GENOMIC DNA]</scope>
    <source>
        <strain>Tuc7</strain>
    </source>
</reference>
<comment type="subunit">
    <text evidence="1">Part of the 50S ribosomal subunit. Contacts protein L32.</text>
</comment>
<comment type="similarity">
    <text evidence="1">Belongs to the bacterial ribosomal protein bL17 family.</text>
</comment>
<gene>
    <name evidence="1" type="primary">rplQ</name>
    <name type="ordered locus">BUAPTUC7_492</name>
</gene>
<accession>B8D823</accession>
<sequence>MRHRKSGRQLNRSSTHLNSMLKNMACSLFTHEVIKTTLSKAKELRRIVEPIITLSKIDTVSHRRLVFSRIRDNAIVAKLFKKLGPCFFSRLGGYTRILKCGFRSGDKAPMAYIELVDRVKNNKKNEILKK</sequence>
<protein>
    <recommendedName>
        <fullName evidence="1">Large ribosomal subunit protein bL17</fullName>
    </recommendedName>
    <alternativeName>
        <fullName evidence="2">50S ribosomal protein L17</fullName>
    </alternativeName>
</protein>
<proteinExistence type="inferred from homology"/>
<organism>
    <name type="scientific">Buchnera aphidicola subsp. Acyrthosiphon pisum (strain Tuc7)</name>
    <dbReference type="NCBI Taxonomy" id="561501"/>
    <lineage>
        <taxon>Bacteria</taxon>
        <taxon>Pseudomonadati</taxon>
        <taxon>Pseudomonadota</taxon>
        <taxon>Gammaproteobacteria</taxon>
        <taxon>Enterobacterales</taxon>
        <taxon>Erwiniaceae</taxon>
        <taxon>Buchnera</taxon>
    </lineage>
</organism>
<name>RL17_BUCAT</name>
<keyword id="KW-0687">Ribonucleoprotein</keyword>
<keyword id="KW-0689">Ribosomal protein</keyword>
<dbReference type="EMBL" id="CP001158">
    <property type="protein sequence ID" value="ACL30288.1"/>
    <property type="molecule type" value="Genomic_DNA"/>
</dbReference>
<dbReference type="RefSeq" id="WP_009874449.1">
    <property type="nucleotide sequence ID" value="NC_011834.1"/>
</dbReference>
<dbReference type="SMR" id="B8D823"/>
<dbReference type="KEGG" id="bau:BUAPTUC7_492"/>
<dbReference type="HOGENOM" id="CLU_074407_2_0_6"/>
<dbReference type="GO" id="GO:0022625">
    <property type="term" value="C:cytosolic large ribosomal subunit"/>
    <property type="evidence" value="ECO:0007669"/>
    <property type="project" value="TreeGrafter"/>
</dbReference>
<dbReference type="GO" id="GO:0003735">
    <property type="term" value="F:structural constituent of ribosome"/>
    <property type="evidence" value="ECO:0007669"/>
    <property type="project" value="InterPro"/>
</dbReference>
<dbReference type="GO" id="GO:0006412">
    <property type="term" value="P:translation"/>
    <property type="evidence" value="ECO:0007669"/>
    <property type="project" value="UniProtKB-UniRule"/>
</dbReference>
<dbReference type="FunFam" id="3.90.1030.10:FF:000001">
    <property type="entry name" value="50S ribosomal protein L17"/>
    <property type="match status" value="1"/>
</dbReference>
<dbReference type="Gene3D" id="3.90.1030.10">
    <property type="entry name" value="Ribosomal protein L17"/>
    <property type="match status" value="1"/>
</dbReference>
<dbReference type="HAMAP" id="MF_01368">
    <property type="entry name" value="Ribosomal_bL17"/>
    <property type="match status" value="1"/>
</dbReference>
<dbReference type="InterPro" id="IPR000456">
    <property type="entry name" value="Ribosomal_bL17"/>
</dbReference>
<dbReference type="InterPro" id="IPR047859">
    <property type="entry name" value="Ribosomal_bL17_CS"/>
</dbReference>
<dbReference type="InterPro" id="IPR036373">
    <property type="entry name" value="Ribosomal_bL17_sf"/>
</dbReference>
<dbReference type="NCBIfam" id="TIGR00059">
    <property type="entry name" value="L17"/>
    <property type="match status" value="1"/>
</dbReference>
<dbReference type="PANTHER" id="PTHR14413:SF16">
    <property type="entry name" value="LARGE RIBOSOMAL SUBUNIT PROTEIN BL17M"/>
    <property type="match status" value="1"/>
</dbReference>
<dbReference type="PANTHER" id="PTHR14413">
    <property type="entry name" value="RIBOSOMAL PROTEIN L17"/>
    <property type="match status" value="1"/>
</dbReference>
<dbReference type="Pfam" id="PF01196">
    <property type="entry name" value="Ribosomal_L17"/>
    <property type="match status" value="1"/>
</dbReference>
<dbReference type="SUPFAM" id="SSF64263">
    <property type="entry name" value="Prokaryotic ribosomal protein L17"/>
    <property type="match status" value="1"/>
</dbReference>
<dbReference type="PROSITE" id="PS01167">
    <property type="entry name" value="RIBOSOMAL_L17"/>
    <property type="match status" value="1"/>
</dbReference>
<feature type="chain" id="PRO_1000184006" description="Large ribosomal subunit protein bL17">
    <location>
        <begin position="1"/>
        <end position="130"/>
    </location>
</feature>
<evidence type="ECO:0000255" key="1">
    <source>
        <dbReference type="HAMAP-Rule" id="MF_01368"/>
    </source>
</evidence>
<evidence type="ECO:0000305" key="2"/>